<keyword id="KW-0227">DNA damage</keyword>
<keyword id="KW-0233">DNA recombination</keyword>
<keyword id="KW-0234">DNA repair</keyword>
<keyword id="KW-0479">Metal-binding</keyword>
<keyword id="KW-0862">Zinc</keyword>
<keyword id="KW-0863">Zinc-finger</keyword>
<dbReference type="EMBL" id="CP000446">
    <property type="protein sequence ID" value="ABI39323.1"/>
    <property type="molecule type" value="Genomic_DNA"/>
</dbReference>
<dbReference type="RefSeq" id="WP_011623013.1">
    <property type="nucleotide sequence ID" value="NC_008321.1"/>
</dbReference>
<dbReference type="SMR" id="Q0HHZ4"/>
<dbReference type="KEGG" id="she:Shewmr4_2252"/>
<dbReference type="HOGENOM" id="CLU_060739_1_2_6"/>
<dbReference type="GO" id="GO:0003677">
    <property type="term" value="F:DNA binding"/>
    <property type="evidence" value="ECO:0007669"/>
    <property type="project" value="UniProtKB-UniRule"/>
</dbReference>
<dbReference type="GO" id="GO:0008270">
    <property type="term" value="F:zinc ion binding"/>
    <property type="evidence" value="ECO:0007669"/>
    <property type="project" value="UniProtKB-KW"/>
</dbReference>
<dbReference type="GO" id="GO:0006310">
    <property type="term" value="P:DNA recombination"/>
    <property type="evidence" value="ECO:0007669"/>
    <property type="project" value="UniProtKB-UniRule"/>
</dbReference>
<dbReference type="GO" id="GO:0006281">
    <property type="term" value="P:DNA repair"/>
    <property type="evidence" value="ECO:0007669"/>
    <property type="project" value="UniProtKB-UniRule"/>
</dbReference>
<dbReference type="CDD" id="cd01025">
    <property type="entry name" value="TOPRIM_recR"/>
    <property type="match status" value="1"/>
</dbReference>
<dbReference type="FunFam" id="1.10.8.420:FF:000001">
    <property type="entry name" value="Recombination protein RecR"/>
    <property type="match status" value="1"/>
</dbReference>
<dbReference type="FunFam" id="3.40.1360.10:FF:000001">
    <property type="entry name" value="Recombination protein RecR"/>
    <property type="match status" value="1"/>
</dbReference>
<dbReference type="Gene3D" id="3.40.1360.10">
    <property type="match status" value="1"/>
</dbReference>
<dbReference type="Gene3D" id="6.10.250.240">
    <property type="match status" value="1"/>
</dbReference>
<dbReference type="Gene3D" id="1.10.8.420">
    <property type="entry name" value="RecR Domain 1"/>
    <property type="match status" value="1"/>
</dbReference>
<dbReference type="HAMAP" id="MF_00017">
    <property type="entry name" value="RecR"/>
    <property type="match status" value="1"/>
</dbReference>
<dbReference type="InterPro" id="IPR000093">
    <property type="entry name" value="DNA_Rcmb_RecR"/>
</dbReference>
<dbReference type="InterPro" id="IPR023627">
    <property type="entry name" value="Rcmb_RecR"/>
</dbReference>
<dbReference type="InterPro" id="IPR015967">
    <property type="entry name" value="Rcmb_RecR_Znf"/>
</dbReference>
<dbReference type="InterPro" id="IPR006171">
    <property type="entry name" value="TOPRIM_dom"/>
</dbReference>
<dbReference type="InterPro" id="IPR034137">
    <property type="entry name" value="TOPRIM_RecR"/>
</dbReference>
<dbReference type="NCBIfam" id="TIGR00615">
    <property type="entry name" value="recR"/>
    <property type="match status" value="1"/>
</dbReference>
<dbReference type="PANTHER" id="PTHR30446">
    <property type="entry name" value="RECOMBINATION PROTEIN RECR"/>
    <property type="match status" value="1"/>
</dbReference>
<dbReference type="PANTHER" id="PTHR30446:SF0">
    <property type="entry name" value="RECOMBINATION PROTEIN RECR"/>
    <property type="match status" value="1"/>
</dbReference>
<dbReference type="Pfam" id="PF21175">
    <property type="entry name" value="RecR_C"/>
    <property type="match status" value="1"/>
</dbReference>
<dbReference type="Pfam" id="PF21176">
    <property type="entry name" value="RecR_HhH"/>
    <property type="match status" value="1"/>
</dbReference>
<dbReference type="Pfam" id="PF02132">
    <property type="entry name" value="RecR_ZnF"/>
    <property type="match status" value="1"/>
</dbReference>
<dbReference type="Pfam" id="PF13662">
    <property type="entry name" value="Toprim_4"/>
    <property type="match status" value="1"/>
</dbReference>
<dbReference type="SMART" id="SM00493">
    <property type="entry name" value="TOPRIM"/>
    <property type="match status" value="1"/>
</dbReference>
<dbReference type="SUPFAM" id="SSF111304">
    <property type="entry name" value="Recombination protein RecR"/>
    <property type="match status" value="1"/>
</dbReference>
<dbReference type="PROSITE" id="PS50880">
    <property type="entry name" value="TOPRIM"/>
    <property type="match status" value="1"/>
</dbReference>
<organism>
    <name type="scientific">Shewanella sp. (strain MR-4)</name>
    <dbReference type="NCBI Taxonomy" id="60480"/>
    <lineage>
        <taxon>Bacteria</taxon>
        <taxon>Pseudomonadati</taxon>
        <taxon>Pseudomonadota</taxon>
        <taxon>Gammaproteobacteria</taxon>
        <taxon>Alteromonadales</taxon>
        <taxon>Shewanellaceae</taxon>
        <taxon>Shewanella</taxon>
    </lineage>
</organism>
<accession>Q0HHZ4</accession>
<reference key="1">
    <citation type="submission" date="2006-08" db="EMBL/GenBank/DDBJ databases">
        <title>Complete sequence of Shewanella sp. MR-4.</title>
        <authorList>
            <consortium name="US DOE Joint Genome Institute"/>
            <person name="Copeland A."/>
            <person name="Lucas S."/>
            <person name="Lapidus A."/>
            <person name="Barry K."/>
            <person name="Detter J.C."/>
            <person name="Glavina del Rio T."/>
            <person name="Hammon N."/>
            <person name="Israni S."/>
            <person name="Dalin E."/>
            <person name="Tice H."/>
            <person name="Pitluck S."/>
            <person name="Kiss H."/>
            <person name="Brettin T."/>
            <person name="Bruce D."/>
            <person name="Han C."/>
            <person name="Tapia R."/>
            <person name="Gilna P."/>
            <person name="Schmutz J."/>
            <person name="Larimer F."/>
            <person name="Land M."/>
            <person name="Hauser L."/>
            <person name="Kyrpides N."/>
            <person name="Mikhailova N."/>
            <person name="Nealson K."/>
            <person name="Konstantinidis K."/>
            <person name="Klappenbach J."/>
            <person name="Tiedje J."/>
            <person name="Richardson P."/>
        </authorList>
    </citation>
    <scope>NUCLEOTIDE SEQUENCE [LARGE SCALE GENOMIC DNA]</scope>
    <source>
        <strain>MR-4</strain>
    </source>
</reference>
<evidence type="ECO:0000255" key="1">
    <source>
        <dbReference type="HAMAP-Rule" id="MF_00017"/>
    </source>
</evidence>
<feature type="chain" id="PRO_1000001608" description="Recombination protein RecR">
    <location>
        <begin position="1"/>
        <end position="199"/>
    </location>
</feature>
<feature type="domain" description="Toprim" evidence="1">
    <location>
        <begin position="81"/>
        <end position="176"/>
    </location>
</feature>
<feature type="zinc finger region" description="C4-type" evidence="1">
    <location>
        <begin position="57"/>
        <end position="72"/>
    </location>
</feature>
<comment type="function">
    <text evidence="1">May play a role in DNA repair. It seems to be involved in an RecBC-independent recombinational process of DNA repair. It may act with RecF and RecO.</text>
</comment>
<comment type="similarity">
    <text evidence="1">Belongs to the RecR family.</text>
</comment>
<gene>
    <name evidence="1" type="primary">recR</name>
    <name type="ordered locus">Shewmr4_2252</name>
</gene>
<protein>
    <recommendedName>
        <fullName evidence="1">Recombination protein RecR</fullName>
    </recommendedName>
</protein>
<name>RECR_SHESM</name>
<proteinExistence type="inferred from homology"/>
<sequence>MKFSPLLDELIQSLRCLPGVGPKSAQRMAFQLLERDRKAGLKLASALSSAMSDIGHCQSCRTYTEESLCPICASHKRGSSSTICVVETPADVLAIEAGGHFSGRYFVLLGHLSPLDGVGPEELGLALLERHLASGDVAELILATNPTVEGEATAHFIADMARRHKVVISRIAHGVPVGGELEYVDSTTLALSFNGRIPL</sequence>